<dbReference type="EMBL" id="AF152490">
    <property type="protein sequence ID" value="AAD43751.1"/>
    <property type="molecule type" value="mRNA"/>
</dbReference>
<dbReference type="EMBL" id="AF217747">
    <property type="protein sequence ID" value="AAK51615.1"/>
    <property type="molecule type" value="mRNA"/>
</dbReference>
<dbReference type="EMBL" id="AK299719">
    <property type="protein sequence ID" value="BAG61619.1"/>
    <property type="molecule type" value="mRNA"/>
</dbReference>
<dbReference type="EMBL" id="AC005752">
    <property type="status" value="NOT_ANNOTATED_CDS"/>
    <property type="molecule type" value="Genomic_DNA"/>
</dbReference>
<dbReference type="EMBL" id="BC112132">
    <property type="protein sequence ID" value="AAI12133.1"/>
    <property type="molecule type" value="mRNA"/>
</dbReference>
<dbReference type="EMBL" id="BC113611">
    <property type="protein sequence ID" value="AAI13612.1"/>
    <property type="molecule type" value="mRNA"/>
</dbReference>
<dbReference type="CCDS" id="CCDS4253.1">
    <molecule id="Q9Y5F2-1"/>
</dbReference>
<dbReference type="RefSeq" id="NP_061754.1">
    <molecule id="Q9Y5F2-1"/>
    <property type="nucleotide sequence ID" value="NM_018931.3"/>
</dbReference>
<dbReference type="SMR" id="Q9Y5F2"/>
<dbReference type="BioGRID" id="121065">
    <property type="interactions" value="114"/>
</dbReference>
<dbReference type="FunCoup" id="Q9Y5F2">
    <property type="interactions" value="53"/>
</dbReference>
<dbReference type="IntAct" id="Q9Y5F2">
    <property type="interactions" value="56"/>
</dbReference>
<dbReference type="STRING" id="9606.ENSP00000346802"/>
<dbReference type="GlyConnect" id="1677">
    <property type="glycosylation" value="1 N-Linked glycan (1 site)"/>
</dbReference>
<dbReference type="GlyCosmos" id="Q9Y5F2">
    <property type="glycosylation" value="5 sites, 2 glycans"/>
</dbReference>
<dbReference type="GlyGen" id="Q9Y5F2">
    <property type="glycosylation" value="6 sites, 1 N-linked glycan (1 site), 2 O-linked glycans (2 sites)"/>
</dbReference>
<dbReference type="iPTMnet" id="Q9Y5F2"/>
<dbReference type="PhosphoSitePlus" id="Q9Y5F2"/>
<dbReference type="BioMuta" id="PCDHB11"/>
<dbReference type="DMDM" id="13431383"/>
<dbReference type="jPOST" id="Q9Y5F2"/>
<dbReference type="MassIVE" id="Q9Y5F2"/>
<dbReference type="PaxDb" id="9606-ENSP00000346802"/>
<dbReference type="PeptideAtlas" id="Q9Y5F2"/>
<dbReference type="ProteomicsDB" id="5021"/>
<dbReference type="ProteomicsDB" id="86351">
    <molecule id="Q9Y5F2-1"/>
</dbReference>
<dbReference type="Antibodypedia" id="27222">
    <property type="antibodies" value="125 antibodies from 24 providers"/>
</dbReference>
<dbReference type="DNASU" id="56125"/>
<dbReference type="Ensembl" id="ENST00000354757.5">
    <molecule id="Q9Y5F2-1"/>
    <property type="protein sequence ID" value="ENSP00000346802.3"/>
    <property type="gene ID" value="ENSG00000197479.7"/>
</dbReference>
<dbReference type="Ensembl" id="ENST00000624887.1">
    <molecule id="Q9Y5F2-2"/>
    <property type="protein sequence ID" value="ENSP00000485553.1"/>
    <property type="gene ID" value="ENSG00000197479.7"/>
</dbReference>
<dbReference type="Ensembl" id="ENST00000708378.1">
    <molecule id="Q9Y5F2-2"/>
    <property type="protein sequence ID" value="ENSP00000517198.1"/>
    <property type="gene ID" value="ENSG00000291690.1"/>
</dbReference>
<dbReference type="Ensembl" id="ENST00000708379.1">
    <molecule id="Q9Y5F2-1"/>
    <property type="protein sequence ID" value="ENSP00000517199.1"/>
    <property type="gene ID" value="ENSG00000291690.1"/>
</dbReference>
<dbReference type="GeneID" id="56125"/>
<dbReference type="KEGG" id="hsa:56125"/>
<dbReference type="MANE-Select" id="ENST00000354757.5">
    <property type="protein sequence ID" value="ENSP00000346802.3"/>
    <property type="RefSeq nucleotide sequence ID" value="NM_018931.3"/>
    <property type="RefSeq protein sequence ID" value="NP_061754.1"/>
</dbReference>
<dbReference type="UCSC" id="uc003liy.4">
    <molecule id="Q9Y5F2-1"/>
    <property type="organism name" value="human"/>
</dbReference>
<dbReference type="AGR" id="HGNC:8682"/>
<dbReference type="CTD" id="56125"/>
<dbReference type="GeneCards" id="PCDHB11"/>
<dbReference type="HGNC" id="HGNC:8682">
    <property type="gene designation" value="PCDHB11"/>
</dbReference>
<dbReference type="HPA" id="ENSG00000197479">
    <property type="expression patterns" value="Low tissue specificity"/>
</dbReference>
<dbReference type="MIM" id="604967">
    <property type="type" value="gene"/>
</dbReference>
<dbReference type="MIM" id="606337">
    <property type="type" value="gene"/>
</dbReference>
<dbReference type="neXtProt" id="NX_Q9Y5F2"/>
<dbReference type="OpenTargets" id="ENSG00000197479"/>
<dbReference type="PharmGKB" id="PA33027"/>
<dbReference type="VEuPathDB" id="HostDB:ENSG00000197479"/>
<dbReference type="eggNOG" id="KOG3594">
    <property type="taxonomic scope" value="Eukaryota"/>
</dbReference>
<dbReference type="GeneTree" id="ENSGT00940000163201"/>
<dbReference type="HOGENOM" id="CLU_006480_3_0_1"/>
<dbReference type="InParanoid" id="Q9Y5F2"/>
<dbReference type="OMA" id="MFSHASE"/>
<dbReference type="OrthoDB" id="6252479at2759"/>
<dbReference type="PAN-GO" id="Q9Y5F2">
    <property type="GO annotations" value="2 GO annotations based on evolutionary models"/>
</dbReference>
<dbReference type="PhylomeDB" id="Q9Y5F2"/>
<dbReference type="TreeFam" id="TF332299"/>
<dbReference type="PathwayCommons" id="Q9Y5F2"/>
<dbReference type="SignaLink" id="Q9Y5F2"/>
<dbReference type="BioGRID-ORCS" id="56125">
    <property type="hits" value="5 hits in 1105 CRISPR screens"/>
</dbReference>
<dbReference type="GeneWiki" id="PCDHB11"/>
<dbReference type="GenomeRNAi" id="56125"/>
<dbReference type="Pharos" id="Q9Y5F2">
    <property type="development level" value="Tdark"/>
</dbReference>
<dbReference type="PRO" id="PR:Q9Y5F2"/>
<dbReference type="Proteomes" id="UP000005640">
    <property type="component" value="Chromosome 5"/>
</dbReference>
<dbReference type="RNAct" id="Q9Y5F2">
    <property type="molecule type" value="protein"/>
</dbReference>
<dbReference type="Bgee" id="ENSG00000197479">
    <property type="expression patterns" value="Expressed in calcaneal tendon and 98 other cell types or tissues"/>
</dbReference>
<dbReference type="GO" id="GO:0016020">
    <property type="term" value="C:membrane"/>
    <property type="evidence" value="ECO:0000303"/>
    <property type="project" value="UniProtKB"/>
</dbReference>
<dbReference type="GO" id="GO:0005886">
    <property type="term" value="C:plasma membrane"/>
    <property type="evidence" value="ECO:0000318"/>
    <property type="project" value="GO_Central"/>
</dbReference>
<dbReference type="GO" id="GO:0045202">
    <property type="term" value="C:synapse"/>
    <property type="evidence" value="ECO:0007669"/>
    <property type="project" value="GOC"/>
</dbReference>
<dbReference type="GO" id="GO:0005509">
    <property type="term" value="F:calcium ion binding"/>
    <property type="evidence" value="ECO:0007669"/>
    <property type="project" value="InterPro"/>
</dbReference>
<dbReference type="GO" id="GO:0016339">
    <property type="term" value="P:calcium-dependent cell-cell adhesion via plasma membrane cell adhesion molecules"/>
    <property type="evidence" value="ECO:0000303"/>
    <property type="project" value="UniProtKB"/>
</dbReference>
<dbReference type="GO" id="GO:0007155">
    <property type="term" value="P:cell adhesion"/>
    <property type="evidence" value="ECO:0000318"/>
    <property type="project" value="GO_Central"/>
</dbReference>
<dbReference type="GO" id="GO:0007268">
    <property type="term" value="P:chemical synaptic transmission"/>
    <property type="evidence" value="ECO:0000304"/>
    <property type="project" value="UniProtKB"/>
</dbReference>
<dbReference type="GO" id="GO:0007156">
    <property type="term" value="P:homophilic cell adhesion via plasma membrane adhesion molecules"/>
    <property type="evidence" value="ECO:0007669"/>
    <property type="project" value="InterPro"/>
</dbReference>
<dbReference type="GO" id="GO:0007399">
    <property type="term" value="P:nervous system development"/>
    <property type="evidence" value="ECO:0000304"/>
    <property type="project" value="ProtInc"/>
</dbReference>
<dbReference type="GO" id="GO:0007416">
    <property type="term" value="P:synapse assembly"/>
    <property type="evidence" value="ECO:0000304"/>
    <property type="project" value="UniProtKB"/>
</dbReference>
<dbReference type="CDD" id="cd11304">
    <property type="entry name" value="Cadherin_repeat"/>
    <property type="match status" value="5"/>
</dbReference>
<dbReference type="FunFam" id="2.60.40.60:FF:000001">
    <property type="entry name" value="Protocadherin alpha 2"/>
    <property type="match status" value="1"/>
</dbReference>
<dbReference type="FunFam" id="2.60.40.60:FF:000002">
    <property type="entry name" value="Protocadherin alpha 2"/>
    <property type="match status" value="1"/>
</dbReference>
<dbReference type="FunFam" id="2.60.40.60:FF:000006">
    <property type="entry name" value="Protocadherin alpha 2"/>
    <property type="match status" value="1"/>
</dbReference>
<dbReference type="FunFam" id="2.60.40.60:FF:000046">
    <property type="entry name" value="Protocadherin beta 5"/>
    <property type="match status" value="1"/>
</dbReference>
<dbReference type="FunFam" id="2.60.40.60:FF:000309">
    <property type="entry name" value="Protocadherin beta-8"/>
    <property type="match status" value="1"/>
</dbReference>
<dbReference type="FunFam" id="2.60.40.60:FF:000018">
    <property type="entry name" value="Protocadherin gamma c3"/>
    <property type="match status" value="1"/>
</dbReference>
<dbReference type="Gene3D" id="2.60.40.60">
    <property type="entry name" value="Cadherins"/>
    <property type="match status" value="6"/>
</dbReference>
<dbReference type="InterPro" id="IPR002126">
    <property type="entry name" value="Cadherin-like_dom"/>
</dbReference>
<dbReference type="InterPro" id="IPR015919">
    <property type="entry name" value="Cadherin-like_sf"/>
</dbReference>
<dbReference type="InterPro" id="IPR032455">
    <property type="entry name" value="Cadherin_C"/>
</dbReference>
<dbReference type="InterPro" id="IPR020894">
    <property type="entry name" value="Cadherin_CS"/>
</dbReference>
<dbReference type="InterPro" id="IPR013164">
    <property type="entry name" value="Cadherin_N"/>
</dbReference>
<dbReference type="InterPro" id="IPR050174">
    <property type="entry name" value="Protocadherin/Cadherin-CA"/>
</dbReference>
<dbReference type="PANTHER" id="PTHR24028">
    <property type="entry name" value="CADHERIN-87A"/>
    <property type="match status" value="1"/>
</dbReference>
<dbReference type="PANTHER" id="PTHR24028:SF286">
    <property type="entry name" value="PROTOCADHERIN BETA-11"/>
    <property type="match status" value="1"/>
</dbReference>
<dbReference type="Pfam" id="PF00028">
    <property type="entry name" value="Cadherin"/>
    <property type="match status" value="5"/>
</dbReference>
<dbReference type="Pfam" id="PF08266">
    <property type="entry name" value="Cadherin_2"/>
    <property type="match status" value="1"/>
</dbReference>
<dbReference type="Pfam" id="PF16492">
    <property type="entry name" value="Cadherin_C_2"/>
    <property type="match status" value="1"/>
</dbReference>
<dbReference type="PRINTS" id="PR00205">
    <property type="entry name" value="CADHERIN"/>
</dbReference>
<dbReference type="SMART" id="SM00112">
    <property type="entry name" value="CA"/>
    <property type="match status" value="6"/>
</dbReference>
<dbReference type="SUPFAM" id="SSF49313">
    <property type="entry name" value="Cadherin-like"/>
    <property type="match status" value="6"/>
</dbReference>
<dbReference type="PROSITE" id="PS00232">
    <property type="entry name" value="CADHERIN_1"/>
    <property type="match status" value="5"/>
</dbReference>
<dbReference type="PROSITE" id="PS50268">
    <property type="entry name" value="CADHERIN_2"/>
    <property type="match status" value="6"/>
</dbReference>
<proteinExistence type="evidence at protein level"/>
<gene>
    <name type="primary">PCDHB11</name>
</gene>
<keyword id="KW-0025">Alternative splicing</keyword>
<keyword id="KW-0106">Calcium</keyword>
<keyword id="KW-0130">Cell adhesion</keyword>
<keyword id="KW-1003">Cell membrane</keyword>
<keyword id="KW-0325">Glycoprotein</keyword>
<keyword id="KW-0472">Membrane</keyword>
<keyword id="KW-1267">Proteomics identification</keyword>
<keyword id="KW-1185">Reference proteome</keyword>
<keyword id="KW-0677">Repeat</keyword>
<keyword id="KW-0732">Signal</keyword>
<keyword id="KW-0812">Transmembrane</keyword>
<keyword id="KW-1133">Transmembrane helix</keyword>
<sequence length="797" mass="87088">MENQGTRTQQIRQVLLLFVLLGMSQAGSETWSFSVAEEMQSGSFVGNLAKDLGLKVRELSSRGARVVSNDKKQRLQLDINTGDLLLSETLDREELCGSIEPCVLHLQVLMQNPTQFLQIELQVRDINDHSPIFSEKQMLLEIPENSPVGAVFLLESAKDLDVGINAVKSYTISPNSHFHIKMRVIPDNRKYPELVLDKALDYEELPELSFILSALDGGSPPRSGTALVRVVVVDINDNSPEFEQAFYEVKIRENSILGSLILIVSAWDLDSGTNGEICYTFSHASEDIRKTFEINQKSGEITLRAPLDFETIESYSIIIQATDGGGLFGKSTVIIHVIDVNDNAPEITVSSITSPIPENTPETVVMVFSIQDIDSGDNGRIVCSIPEDLPFVLKSSVENYYTLETERPLDRESTAEYNITITVTDLGIPRLKTEHNTTVLVSDVNDNAPTFTQTSYTLFVRENNSPALHIGSVSATDRDSGTNAQVNYSLLPPQDLHLPLASLVSINTDNGHLFALRSLDYEALQAFDFRVGATDRGSPALSSEALVRVLVLDANDNSPFVLYPLQNGSAPCTELVPRAAEPGYLVTKVVAVDGDSGQNAWLSYQLLKATEPGLFGVWAHNGEVRTARLLSERDAAKHRLVVLVKDNGEPPRSATATLQVLLVDGFSQPYLPLPEAAPAQAQADSLTVYLVVALASVSSLFLFSVLLFVAVRLCRRSRAASVGSCSVPKGPFPGHLVDVSGTGTLSQSYQYEVCLTGGSETNEFKFLKPVIPNIQAKGLGKNSEENSTFRNSFGFNF</sequence>
<organism>
    <name type="scientific">Homo sapiens</name>
    <name type="common">Human</name>
    <dbReference type="NCBI Taxonomy" id="9606"/>
    <lineage>
        <taxon>Eukaryota</taxon>
        <taxon>Metazoa</taxon>
        <taxon>Chordata</taxon>
        <taxon>Craniata</taxon>
        <taxon>Vertebrata</taxon>
        <taxon>Euteleostomi</taxon>
        <taxon>Mammalia</taxon>
        <taxon>Eutheria</taxon>
        <taxon>Euarchontoglires</taxon>
        <taxon>Primates</taxon>
        <taxon>Haplorrhini</taxon>
        <taxon>Catarrhini</taxon>
        <taxon>Hominidae</taxon>
        <taxon>Homo</taxon>
    </lineage>
</organism>
<accession>Q9Y5F2</accession>
<accession>B4DSF7</accession>
<accession>Q2M223</accession>
<feature type="signal peptide" evidence="2">
    <location>
        <begin position="1"/>
        <end position="26"/>
    </location>
</feature>
<feature type="chain" id="PRO_0000003934" description="Protocadherin beta-11">
    <location>
        <begin position="27"/>
        <end position="797"/>
    </location>
</feature>
<feature type="topological domain" description="Extracellular" evidence="2">
    <location>
        <begin position="27"/>
        <end position="690"/>
    </location>
</feature>
<feature type="transmembrane region" description="Helical" evidence="2">
    <location>
        <begin position="691"/>
        <end position="711"/>
    </location>
</feature>
<feature type="topological domain" description="Cytoplasmic" evidence="2">
    <location>
        <begin position="712"/>
        <end position="797"/>
    </location>
</feature>
<feature type="domain" description="Cadherin 1" evidence="3">
    <location>
        <begin position="35"/>
        <end position="133"/>
    </location>
</feature>
<feature type="domain" description="Cadherin 2" evidence="3">
    <location>
        <begin position="138"/>
        <end position="242"/>
    </location>
</feature>
<feature type="domain" description="Cadherin 3" evidence="3">
    <location>
        <begin position="247"/>
        <end position="347"/>
    </location>
</feature>
<feature type="domain" description="Cadherin 4" evidence="3">
    <location>
        <begin position="352"/>
        <end position="451"/>
    </location>
</feature>
<feature type="domain" description="Cadherin 5" evidence="3">
    <location>
        <begin position="456"/>
        <end position="561"/>
    </location>
</feature>
<feature type="domain" description="Cadherin 6" evidence="3">
    <location>
        <begin position="568"/>
        <end position="671"/>
    </location>
</feature>
<feature type="glycosylation site" description="N-linked (GlcNAc...) asparagine" evidence="2">
    <location>
        <position position="418"/>
    </location>
</feature>
<feature type="glycosylation site" description="N-linked (GlcNAc...) asparagine" evidence="2">
    <location>
        <position position="436"/>
    </location>
</feature>
<feature type="glycosylation site" description="N-linked (GlcNAc...) asparagine" evidence="2">
    <location>
        <position position="487"/>
    </location>
</feature>
<feature type="glycosylation site" description="N-linked (GlcNAc...) asparagine" evidence="2">
    <location>
        <position position="567"/>
    </location>
</feature>
<feature type="splice variant" id="VSP_055931" description="In isoform 2." evidence="4">
    <location>
        <begin position="1"/>
        <end position="365"/>
    </location>
</feature>
<feature type="sequence variant" id="VAR_021881" description="In dbSNP:rs3756323.">
    <original>Q</original>
    <variation>R</variation>
    <location>
        <position position="4"/>
    </location>
</feature>
<feature type="sequence variant" id="VAR_048553" description="In dbSNP:rs917535.">
    <original>R</original>
    <variation>H</variation>
    <location>
        <position position="7"/>
    </location>
</feature>
<feature type="sequence variant" id="VAR_059188" description="In dbSNP:rs799834.">
    <original>D</original>
    <variation>E</variation>
    <location>
        <position position="528"/>
    </location>
</feature>
<name>PCDBB_HUMAN</name>
<protein>
    <recommendedName>
        <fullName>Protocadherin beta-11</fullName>
        <shortName>PCDH-beta-11</shortName>
    </recommendedName>
</protein>
<reference key="1">
    <citation type="journal article" date="1999" name="Cell">
        <title>A striking organization of a large family of human neural cadherin-like cell adhesion genes.</title>
        <authorList>
            <person name="Wu Q."/>
            <person name="Maniatis T."/>
        </authorList>
    </citation>
    <scope>NUCLEOTIDE SEQUENCE [MRNA] (ISOFORM 1)</scope>
</reference>
<reference key="2">
    <citation type="journal article" date="2001" name="FEBS Lett.">
        <title>The human and murine protocadherin-beta one-exon gene families show high evolutionary conservation, despite the difference in gene number.</title>
        <authorList>
            <person name="Vanhalst K."/>
            <person name="Kools P."/>
            <person name="Vanden Eynde E."/>
            <person name="van Roy F."/>
        </authorList>
    </citation>
    <scope>NUCLEOTIDE SEQUENCE [MRNA] (ISOFORM 1)</scope>
</reference>
<reference key="3">
    <citation type="journal article" date="2004" name="Nat. Genet.">
        <title>Complete sequencing and characterization of 21,243 full-length human cDNAs.</title>
        <authorList>
            <person name="Ota T."/>
            <person name="Suzuki Y."/>
            <person name="Nishikawa T."/>
            <person name="Otsuki T."/>
            <person name="Sugiyama T."/>
            <person name="Irie R."/>
            <person name="Wakamatsu A."/>
            <person name="Hayashi K."/>
            <person name="Sato H."/>
            <person name="Nagai K."/>
            <person name="Kimura K."/>
            <person name="Makita H."/>
            <person name="Sekine M."/>
            <person name="Obayashi M."/>
            <person name="Nishi T."/>
            <person name="Shibahara T."/>
            <person name="Tanaka T."/>
            <person name="Ishii S."/>
            <person name="Yamamoto J."/>
            <person name="Saito K."/>
            <person name="Kawai Y."/>
            <person name="Isono Y."/>
            <person name="Nakamura Y."/>
            <person name="Nagahari K."/>
            <person name="Murakami K."/>
            <person name="Yasuda T."/>
            <person name="Iwayanagi T."/>
            <person name="Wagatsuma M."/>
            <person name="Shiratori A."/>
            <person name="Sudo H."/>
            <person name="Hosoiri T."/>
            <person name="Kaku Y."/>
            <person name="Kodaira H."/>
            <person name="Kondo H."/>
            <person name="Sugawara M."/>
            <person name="Takahashi M."/>
            <person name="Kanda K."/>
            <person name="Yokoi T."/>
            <person name="Furuya T."/>
            <person name="Kikkawa E."/>
            <person name="Omura Y."/>
            <person name="Abe K."/>
            <person name="Kamihara K."/>
            <person name="Katsuta N."/>
            <person name="Sato K."/>
            <person name="Tanikawa M."/>
            <person name="Yamazaki M."/>
            <person name="Ninomiya K."/>
            <person name="Ishibashi T."/>
            <person name="Yamashita H."/>
            <person name="Murakawa K."/>
            <person name="Fujimori K."/>
            <person name="Tanai H."/>
            <person name="Kimata M."/>
            <person name="Watanabe M."/>
            <person name="Hiraoka S."/>
            <person name="Chiba Y."/>
            <person name="Ishida S."/>
            <person name="Ono Y."/>
            <person name="Takiguchi S."/>
            <person name="Watanabe S."/>
            <person name="Yosida M."/>
            <person name="Hotuta T."/>
            <person name="Kusano J."/>
            <person name="Kanehori K."/>
            <person name="Takahashi-Fujii A."/>
            <person name="Hara H."/>
            <person name="Tanase T.-O."/>
            <person name="Nomura Y."/>
            <person name="Togiya S."/>
            <person name="Komai F."/>
            <person name="Hara R."/>
            <person name="Takeuchi K."/>
            <person name="Arita M."/>
            <person name="Imose N."/>
            <person name="Musashino K."/>
            <person name="Yuuki H."/>
            <person name="Oshima A."/>
            <person name="Sasaki N."/>
            <person name="Aotsuka S."/>
            <person name="Yoshikawa Y."/>
            <person name="Matsunawa H."/>
            <person name="Ichihara T."/>
            <person name="Shiohata N."/>
            <person name="Sano S."/>
            <person name="Moriya S."/>
            <person name="Momiyama H."/>
            <person name="Satoh N."/>
            <person name="Takami S."/>
            <person name="Terashima Y."/>
            <person name="Suzuki O."/>
            <person name="Nakagawa S."/>
            <person name="Senoh A."/>
            <person name="Mizoguchi H."/>
            <person name="Goto Y."/>
            <person name="Shimizu F."/>
            <person name="Wakebe H."/>
            <person name="Hishigaki H."/>
            <person name="Watanabe T."/>
            <person name="Sugiyama A."/>
            <person name="Takemoto M."/>
            <person name="Kawakami B."/>
            <person name="Yamazaki M."/>
            <person name="Watanabe K."/>
            <person name="Kumagai A."/>
            <person name="Itakura S."/>
            <person name="Fukuzumi Y."/>
            <person name="Fujimori Y."/>
            <person name="Komiyama M."/>
            <person name="Tashiro H."/>
            <person name="Tanigami A."/>
            <person name="Fujiwara T."/>
            <person name="Ono T."/>
            <person name="Yamada K."/>
            <person name="Fujii Y."/>
            <person name="Ozaki K."/>
            <person name="Hirao M."/>
            <person name="Ohmori Y."/>
            <person name="Kawabata A."/>
            <person name="Hikiji T."/>
            <person name="Kobatake N."/>
            <person name="Inagaki H."/>
            <person name="Ikema Y."/>
            <person name="Okamoto S."/>
            <person name="Okitani R."/>
            <person name="Kawakami T."/>
            <person name="Noguchi S."/>
            <person name="Itoh T."/>
            <person name="Shigeta K."/>
            <person name="Senba T."/>
            <person name="Matsumura K."/>
            <person name="Nakajima Y."/>
            <person name="Mizuno T."/>
            <person name="Morinaga M."/>
            <person name="Sasaki M."/>
            <person name="Togashi T."/>
            <person name="Oyama M."/>
            <person name="Hata H."/>
            <person name="Watanabe M."/>
            <person name="Komatsu T."/>
            <person name="Mizushima-Sugano J."/>
            <person name="Satoh T."/>
            <person name="Shirai Y."/>
            <person name="Takahashi Y."/>
            <person name="Nakagawa K."/>
            <person name="Okumura K."/>
            <person name="Nagase T."/>
            <person name="Nomura N."/>
            <person name="Kikuchi H."/>
            <person name="Masuho Y."/>
            <person name="Yamashita R."/>
            <person name="Nakai K."/>
            <person name="Yada T."/>
            <person name="Nakamura Y."/>
            <person name="Ohara O."/>
            <person name="Isogai T."/>
            <person name="Sugano S."/>
        </authorList>
    </citation>
    <scope>NUCLEOTIDE SEQUENCE [LARGE SCALE MRNA] (ISOFORM 2)</scope>
    <source>
        <tissue>Brain</tissue>
    </source>
</reference>
<reference key="4">
    <citation type="journal article" date="2004" name="Nature">
        <title>The DNA sequence and comparative analysis of human chromosome 5.</title>
        <authorList>
            <person name="Schmutz J."/>
            <person name="Martin J."/>
            <person name="Terry A."/>
            <person name="Couronne O."/>
            <person name="Grimwood J."/>
            <person name="Lowry S."/>
            <person name="Gordon L.A."/>
            <person name="Scott D."/>
            <person name="Xie G."/>
            <person name="Huang W."/>
            <person name="Hellsten U."/>
            <person name="Tran-Gyamfi M."/>
            <person name="She X."/>
            <person name="Prabhakar S."/>
            <person name="Aerts A."/>
            <person name="Altherr M."/>
            <person name="Bajorek E."/>
            <person name="Black S."/>
            <person name="Branscomb E."/>
            <person name="Caoile C."/>
            <person name="Challacombe J.F."/>
            <person name="Chan Y.M."/>
            <person name="Denys M."/>
            <person name="Detter J.C."/>
            <person name="Escobar J."/>
            <person name="Flowers D."/>
            <person name="Fotopulos D."/>
            <person name="Glavina T."/>
            <person name="Gomez M."/>
            <person name="Gonzales E."/>
            <person name="Goodstein D."/>
            <person name="Grigoriev I."/>
            <person name="Groza M."/>
            <person name="Hammon N."/>
            <person name="Hawkins T."/>
            <person name="Haydu L."/>
            <person name="Israni S."/>
            <person name="Jett J."/>
            <person name="Kadner K."/>
            <person name="Kimball H."/>
            <person name="Kobayashi A."/>
            <person name="Lopez F."/>
            <person name="Lou Y."/>
            <person name="Martinez D."/>
            <person name="Medina C."/>
            <person name="Morgan J."/>
            <person name="Nandkeshwar R."/>
            <person name="Noonan J.P."/>
            <person name="Pitluck S."/>
            <person name="Pollard M."/>
            <person name="Predki P."/>
            <person name="Priest J."/>
            <person name="Ramirez L."/>
            <person name="Retterer J."/>
            <person name="Rodriguez A."/>
            <person name="Rogers S."/>
            <person name="Salamov A."/>
            <person name="Salazar A."/>
            <person name="Thayer N."/>
            <person name="Tice H."/>
            <person name="Tsai M."/>
            <person name="Ustaszewska A."/>
            <person name="Vo N."/>
            <person name="Wheeler J."/>
            <person name="Wu K."/>
            <person name="Yang J."/>
            <person name="Dickson M."/>
            <person name="Cheng J.-F."/>
            <person name="Eichler E.E."/>
            <person name="Olsen A."/>
            <person name="Pennacchio L.A."/>
            <person name="Rokhsar D.S."/>
            <person name="Richardson P."/>
            <person name="Lucas S.M."/>
            <person name="Myers R.M."/>
            <person name="Rubin E.M."/>
        </authorList>
    </citation>
    <scope>NUCLEOTIDE SEQUENCE [LARGE SCALE GENOMIC DNA]</scope>
</reference>
<reference key="5">
    <citation type="journal article" date="2004" name="Genome Res.">
        <title>The status, quality, and expansion of the NIH full-length cDNA project: the Mammalian Gene Collection (MGC).</title>
        <authorList>
            <consortium name="The MGC Project Team"/>
        </authorList>
    </citation>
    <scope>NUCLEOTIDE SEQUENCE [LARGE SCALE MRNA] (ISOFORM 1)</scope>
    <source>
        <tissue>Placenta</tissue>
    </source>
</reference>
<evidence type="ECO:0000250" key="1"/>
<evidence type="ECO:0000255" key="2"/>
<evidence type="ECO:0000255" key="3">
    <source>
        <dbReference type="PROSITE-ProRule" id="PRU00043"/>
    </source>
</evidence>
<evidence type="ECO:0000303" key="4">
    <source>
    </source>
</evidence>
<comment type="function">
    <text>Potential calcium-dependent cell-adhesion protein. May be involved in the establishment and maintenance of specific neuronal connections in the brain.</text>
</comment>
<comment type="subcellular location">
    <subcellularLocation>
        <location evidence="1">Cell membrane</location>
        <topology evidence="1">Single-pass type I membrane protein</topology>
    </subcellularLocation>
</comment>
<comment type="alternative products">
    <event type="alternative splicing"/>
    <isoform>
        <id>Q9Y5F2-1</id>
        <name>1</name>
        <sequence type="displayed"/>
    </isoform>
    <isoform>
        <id>Q9Y5F2-2</id>
        <name>2</name>
        <sequence type="described" ref="VSP_055931"/>
    </isoform>
</comment>